<name>TI214_GOSBA</name>
<evidence type="ECO:0000250" key="1">
    <source>
        <dbReference type="UniProtKB" id="P56785"/>
    </source>
</evidence>
<evidence type="ECO:0000255" key="2"/>
<evidence type="ECO:0000256" key="3">
    <source>
        <dbReference type="SAM" id="MobiDB-lite"/>
    </source>
</evidence>
<evidence type="ECO:0000305" key="4"/>
<protein>
    <recommendedName>
        <fullName evidence="1">Protein TIC 214</fullName>
    </recommendedName>
    <alternativeName>
        <fullName evidence="1">Translocon at the inner envelope membrane of chloroplasts 214</fullName>
        <shortName evidence="1">AtTIC214</shortName>
    </alternativeName>
</protein>
<dbReference type="EMBL" id="AP009123">
    <property type="protein sequence ID" value="BAF41305.1"/>
    <property type="molecule type" value="Genomic_DNA"/>
</dbReference>
<dbReference type="RefSeq" id="YP_913244.1">
    <property type="nucleotide sequence ID" value="NC_008641.1"/>
</dbReference>
<dbReference type="GeneID" id="4575304"/>
<dbReference type="GO" id="GO:0009706">
    <property type="term" value="C:chloroplast inner membrane"/>
    <property type="evidence" value="ECO:0007669"/>
    <property type="project" value="UniProtKB-SubCell"/>
</dbReference>
<dbReference type="GO" id="GO:0015031">
    <property type="term" value="P:protein transport"/>
    <property type="evidence" value="ECO:0007669"/>
    <property type="project" value="UniProtKB-KW"/>
</dbReference>
<dbReference type="InterPro" id="IPR008896">
    <property type="entry name" value="TIC214"/>
</dbReference>
<dbReference type="PANTHER" id="PTHR33163:SF40">
    <property type="entry name" value="PROTEIN TIC 214"/>
    <property type="match status" value="1"/>
</dbReference>
<dbReference type="PANTHER" id="PTHR33163">
    <property type="entry name" value="PROTEIN TIC 214-RELATED"/>
    <property type="match status" value="1"/>
</dbReference>
<dbReference type="Pfam" id="PF05758">
    <property type="entry name" value="Ycf1"/>
    <property type="match status" value="1"/>
</dbReference>
<accession>A0ZZ93</accession>
<organism>
    <name type="scientific">Gossypium barbadense</name>
    <name type="common">Sea Island cotton</name>
    <name type="synonym">Hibiscus barbadensis</name>
    <dbReference type="NCBI Taxonomy" id="3634"/>
    <lineage>
        <taxon>Eukaryota</taxon>
        <taxon>Viridiplantae</taxon>
        <taxon>Streptophyta</taxon>
        <taxon>Embryophyta</taxon>
        <taxon>Tracheophyta</taxon>
        <taxon>Spermatophyta</taxon>
        <taxon>Magnoliopsida</taxon>
        <taxon>eudicotyledons</taxon>
        <taxon>Gunneridae</taxon>
        <taxon>Pentapetalae</taxon>
        <taxon>rosids</taxon>
        <taxon>malvids</taxon>
        <taxon>Malvales</taxon>
        <taxon>Malvaceae</taxon>
        <taxon>Malvoideae</taxon>
        <taxon>Gossypium</taxon>
    </lineage>
</organism>
<keyword id="KW-0150">Chloroplast</keyword>
<keyword id="KW-0472">Membrane</keyword>
<keyword id="KW-0934">Plastid</keyword>
<keyword id="KW-1001">Plastid inner membrane</keyword>
<keyword id="KW-0653">Protein transport</keyword>
<keyword id="KW-0812">Transmembrane</keyword>
<keyword id="KW-1133">Transmembrane helix</keyword>
<keyword id="KW-0813">Transport</keyword>
<reference key="1">
    <citation type="journal article" date="2006" name="Genes Genet. Syst.">
        <title>Complete nucleotide sequence of the cotton (Gossypium barbadense L.) chloroplast genome with a comparative analysis of sequences among 9 dicot plants.</title>
        <authorList>
            <person name="Ibrahim R.I.H."/>
            <person name="Azuma J."/>
            <person name="Sakamoto M."/>
        </authorList>
    </citation>
    <scope>NUCLEOTIDE SEQUENCE [LARGE SCALE GENOMIC DNA]</scope>
</reference>
<comment type="function">
    <text evidence="1">Involved in protein precursor import into chloroplasts. May be part of an intermediate translocation complex acting as a protein-conducting channel at the inner envelope.</text>
</comment>
<comment type="subunit">
    <text evidence="1">Part of the Tic complex.</text>
</comment>
<comment type="subcellular location">
    <subcellularLocation>
        <location evidence="1">Plastid</location>
        <location evidence="1">Chloroplast inner membrane</location>
        <topology evidence="2">Multi-pass membrane protein</topology>
    </subcellularLocation>
</comment>
<comment type="similarity">
    <text evidence="4">Belongs to the TIC214 family.</text>
</comment>
<feature type="chain" id="PRO_0000326575" description="Protein TIC 214">
    <location>
        <begin position="1"/>
        <end position="1889"/>
    </location>
</feature>
<feature type="transmembrane region" description="Helical" evidence="2">
    <location>
        <begin position="11"/>
        <end position="31"/>
    </location>
</feature>
<feature type="transmembrane region" description="Helical" evidence="2">
    <location>
        <begin position="67"/>
        <end position="87"/>
    </location>
</feature>
<feature type="transmembrane region" description="Helical" evidence="2">
    <location>
        <begin position="88"/>
        <end position="108"/>
    </location>
</feature>
<feature type="transmembrane region" description="Helical" evidence="2">
    <location>
        <begin position="127"/>
        <end position="147"/>
    </location>
</feature>
<feature type="transmembrane region" description="Helical" evidence="2">
    <location>
        <begin position="175"/>
        <end position="195"/>
    </location>
</feature>
<feature type="transmembrane region" description="Helical" evidence="2">
    <location>
        <begin position="224"/>
        <end position="244"/>
    </location>
</feature>
<feature type="region of interest" description="Disordered" evidence="3">
    <location>
        <begin position="255"/>
        <end position="303"/>
    </location>
</feature>
<feature type="region of interest" description="Disordered" evidence="3">
    <location>
        <begin position="1610"/>
        <end position="1633"/>
    </location>
</feature>
<feature type="compositionally biased region" description="Acidic residues" evidence="3">
    <location>
        <begin position="255"/>
        <end position="265"/>
    </location>
</feature>
<feature type="compositionally biased region" description="Polar residues" evidence="3">
    <location>
        <begin position="279"/>
        <end position="293"/>
    </location>
</feature>
<geneLocation type="chloroplast"/>
<proteinExistence type="inferred from homology"/>
<sequence length="1889" mass="224997">MILKSFIPGNLISLYMTIINSVVMVGLYYGFLTTLSIGPSYIFLLRARFMEEGEEGTEKRVSATTGFIAGQLMMFISIYYVPLHLALGKPHTITVLALPYLLFHFFWNNHKDFFDHRRPTRNSMRNLSIQCVFLNNLIIQLFNHFILPSSMLARLVNIYMFRCNNNMLFVTSSFVGWLIGHILLMKWVGLVLVWIQQNNLIRSNVLIRSNKYLVSEFRNSMARIFSILLFITCVYYLGRIPSPILTKKLKGISEPEEVGESEEERNIEIETISEGGGANQKQGTEENTSSSLFSEEEVDPSKETEKLRVTGKKKKKIKGEFHFRFKETYYKNRPVYETSYLDGNQESSKLEILKKKEDKYLLWIEKPLVTLLFDSKRWNRPLRYIKNDRVENAIKNEMSQYFFYTCQSDGKEKISFTYPPSLATFGEMIQKKIYFFTPEKWFSDELYTDWSFINELKRRNLSKEFIKRVESLDKESFDLGILEKRTRFSNNETKREYLPKLYDPFLHGPYRGRIKKWGSPLSINQTYKKKNTDPSWINKIHALLLTTDYHDLEQTLDTLNIKSLATEKELSLLTLTEDEQGDSEDRVKILKFLFNIVITNPNNQTIRKKSIGIKEISKKVPRWSYKLIDDLEQQEGENEENVTAEHEIRSRKSKRVVIFTNNQANADTYTNTKDAIDPDQTDEVALIRYSQQSDFRRDIIKGSMRAQRRKTITWELFQANVHSPLCLDRVDKPLFFSFDISGPLKRISRNWICKNKESKISDYTEKKIEKKDEAKREKYKREEKMRIEIAEAWDSLLLAQVIRGSVLITQSILRKYIILPSLIIVKNIARMLLFQFPEWSEDLTDWNREMHVKCTYNGVQLSETEFPKNWLTDGIQIKILFPFCLKPWHRFKLQPSHKDPMKKKKGQKNDFCFLTVWGMETELPFGSPRKRRSFFEPIFKELKKKIKKWKTKCFIALTILKEKTKLFRKASKETKKWITQSILFLKGIIKELSKINPIPFFGLREPYELGETKKDSIISNKMIHKSSLQIQSMSWTNYSLTEKKIKDLTKRTNTIKNQIQKILIIKDKKNEFLTQEINSSSNKISYQDKILESSKKFWQIVKRRNIRLIRKFYFFINFFIEKIYMDILLYIINIPRTNTQLFLESTKKMIENFIHNNEANQERINKTTKNTTHFISTIKTSLSSLSNISIRNKNEKAFCDLSSLSQAYVFYKLSQTQVISFYKFKPILQYHGTSLFLKNEIKDYFEERGVSHSRLRHHYGLRQKIVWHSGMNEWKNWLRSRYQYDLVQNRWLKLGPGQWRNGVNQHYLAQNKHLPKWDSDEKERLIHYEKKNDFQANSLLTQEYKLNQEQKYKKSNFKKHYGYDFLSYKSINYQDKRDPYAYGSPFQVNKREESSYHYNMDKQNFFDTLRDIPIHNYLGEGDILDAMGNFSHRKFFNWRILDFCLRNKVDIESWVDTSTKSKKNIKTVVKNYQIIDKMDLFYFTIYQDQESNPSNKKGSHFDWMGLNEEILSHPIPNLELWFFPEFVLLYNAYKVKPWIIPIKLLLFNFNGNRNINKNIIENKKRDSLIAPNEKQIIGLENRNQEEKEPIGEGGLVSDAQKQGNFKSVLSNQEKDVEEDYDKSDKKKRRKKKQYKSNTEAELDFFLKRYLRFQLRWDDSLNQRIINNIKVYCLLLRLINPNEIVISSIQRGEMNLDILMIQKDLTLRELMKKGILIIDPVRLSVKNDGQFILYQTISILLVHKNKHQINQRYQEKNYIDKNHFYEFIARHQKMTENKDKNHYDLFVPENILSPNHRRELRIRISFNSRDKNGMHRNAVFLNNVKNCGQVLTKNKHLDSDKKKLIKLKFFLWPNYRLEDLACMNRYWFNTNNGSRFSMIRIRMYPRLKIR</sequence>
<gene>
    <name evidence="1" type="primary">TIC214</name>
    <name type="synonym">ycf1</name>
</gene>